<keyword id="KW-0249">Electron transport</keyword>
<keyword id="KW-0349">Heme</keyword>
<keyword id="KW-0408">Iron</keyword>
<keyword id="KW-0472">Membrane</keyword>
<keyword id="KW-0479">Metal-binding</keyword>
<keyword id="KW-0496">Mitochondrion</keyword>
<keyword id="KW-0999">Mitochondrion inner membrane</keyword>
<keyword id="KW-0679">Respiratory chain</keyword>
<keyword id="KW-0812">Transmembrane</keyword>
<keyword id="KW-1133">Transmembrane helix</keyword>
<keyword id="KW-0813">Transport</keyword>
<keyword id="KW-0830">Ubiquinone</keyword>
<evidence type="ECO:0000250" key="1"/>
<evidence type="ECO:0000250" key="2">
    <source>
        <dbReference type="UniProtKB" id="P00157"/>
    </source>
</evidence>
<evidence type="ECO:0000255" key="3">
    <source>
        <dbReference type="PROSITE-ProRule" id="PRU00967"/>
    </source>
</evidence>
<evidence type="ECO:0000255" key="4">
    <source>
        <dbReference type="PROSITE-ProRule" id="PRU00968"/>
    </source>
</evidence>
<proteinExistence type="inferred from homology"/>
<gene>
    <name type="primary">MT-CYB</name>
    <name type="synonym">COB</name>
    <name type="synonym">CYTB</name>
    <name type="synonym">MTCYB</name>
</gene>
<feature type="chain" id="PRO_0000255009" description="Cytochrome b">
    <location>
        <begin position="1"/>
        <end position="380"/>
    </location>
</feature>
<feature type="transmembrane region" description="Helical" evidence="2">
    <location>
        <begin position="33"/>
        <end position="53"/>
    </location>
</feature>
<feature type="transmembrane region" description="Helical" evidence="2">
    <location>
        <begin position="77"/>
        <end position="98"/>
    </location>
</feature>
<feature type="transmembrane region" description="Helical" evidence="2">
    <location>
        <begin position="113"/>
        <end position="133"/>
    </location>
</feature>
<feature type="transmembrane region" description="Helical" evidence="2">
    <location>
        <begin position="178"/>
        <end position="198"/>
    </location>
</feature>
<feature type="transmembrane region" description="Helical" evidence="2">
    <location>
        <begin position="226"/>
        <end position="246"/>
    </location>
</feature>
<feature type="transmembrane region" description="Helical" evidence="2">
    <location>
        <begin position="288"/>
        <end position="308"/>
    </location>
</feature>
<feature type="transmembrane region" description="Helical" evidence="2">
    <location>
        <begin position="320"/>
        <end position="340"/>
    </location>
</feature>
<feature type="transmembrane region" description="Helical" evidence="2">
    <location>
        <begin position="347"/>
        <end position="367"/>
    </location>
</feature>
<feature type="binding site" description="axial binding residue" evidence="2">
    <location>
        <position position="83"/>
    </location>
    <ligand>
        <name>heme b</name>
        <dbReference type="ChEBI" id="CHEBI:60344"/>
        <label>b562</label>
    </ligand>
    <ligandPart>
        <name>Fe</name>
        <dbReference type="ChEBI" id="CHEBI:18248"/>
    </ligandPart>
</feature>
<feature type="binding site" description="axial binding residue" evidence="2">
    <location>
        <position position="97"/>
    </location>
    <ligand>
        <name>heme b</name>
        <dbReference type="ChEBI" id="CHEBI:60344"/>
        <label>b566</label>
    </ligand>
    <ligandPart>
        <name>Fe</name>
        <dbReference type="ChEBI" id="CHEBI:18248"/>
    </ligandPart>
</feature>
<feature type="binding site" description="axial binding residue" evidence="2">
    <location>
        <position position="182"/>
    </location>
    <ligand>
        <name>heme b</name>
        <dbReference type="ChEBI" id="CHEBI:60344"/>
        <label>b562</label>
    </ligand>
    <ligandPart>
        <name>Fe</name>
        <dbReference type="ChEBI" id="CHEBI:18248"/>
    </ligandPart>
</feature>
<feature type="binding site" description="axial binding residue" evidence="2">
    <location>
        <position position="196"/>
    </location>
    <ligand>
        <name>heme b</name>
        <dbReference type="ChEBI" id="CHEBI:60344"/>
        <label>b566</label>
    </ligand>
    <ligandPart>
        <name>Fe</name>
        <dbReference type="ChEBI" id="CHEBI:18248"/>
    </ligandPart>
</feature>
<feature type="binding site" evidence="2">
    <location>
        <position position="201"/>
    </location>
    <ligand>
        <name>a ubiquinone</name>
        <dbReference type="ChEBI" id="CHEBI:16389"/>
    </ligand>
</feature>
<feature type="sequence variant" description="In strain: Isolate LHS 541.">
    <original>V</original>
    <variation>A</variation>
    <location>
        <position position="232"/>
    </location>
</feature>
<feature type="sequence variant" description="In strain: Isolate LHS 541.">
    <original>I</original>
    <variation>T</variation>
    <location>
        <position position="348"/>
    </location>
</feature>
<feature type="sequence variant" description="In strain: Isolate LHS 541.">
    <original>V</original>
    <variation>I</variation>
    <location>
        <position position="363"/>
    </location>
</feature>
<feature type="sequence variant" description="In strain: Isolate LHS 541.">
    <original>M</original>
    <variation>I</variation>
    <location>
        <position position="368"/>
    </location>
</feature>
<organism>
    <name type="scientific">Clethrionomys californicus</name>
    <name type="common">Western red-backed vole</name>
    <name type="synonym">Myodes californicus</name>
    <dbReference type="NCBI Taxonomy" id="913846"/>
    <lineage>
        <taxon>Eukaryota</taxon>
        <taxon>Metazoa</taxon>
        <taxon>Chordata</taxon>
        <taxon>Craniata</taxon>
        <taxon>Vertebrata</taxon>
        <taxon>Euteleostomi</taxon>
        <taxon>Mammalia</taxon>
        <taxon>Eutheria</taxon>
        <taxon>Euarchontoglires</taxon>
        <taxon>Glires</taxon>
        <taxon>Rodentia</taxon>
        <taxon>Myomorpha</taxon>
        <taxon>Muroidea</taxon>
        <taxon>Cricetidae</taxon>
        <taxon>Arvicolinae</taxon>
        <taxon>Myodes</taxon>
    </lineage>
</organism>
<accession>Q6W6K7</accession>
<accession>Q6W6K6</accession>
<sequence>MTIIRKKHPLIKIINHSFIDLPTPSNISSWWNFGSLLGLCLIIQILTGLFLAMHYTSDTSTAFSSVTHICRDVNYGWLIRYMHANGASMFFICLFLHVGRGMYYGSYNMIETWNMGIVLLFAVMATAFMGYVLPWGQMSFWGATVITNLLSAIPYIGTTLVEWIWGGFSVDKATLTRFFAFHFILPFIITALVFVHLLFLHETGSNNPTGLNSDADKIPFHPYYTIKDFLGVLILLMGLMILVLFFPDVLGDPDNYTPANPLNTPAHIKPEWYFLFAYAILRSIPNKLGGVLALILSILILALLPLLHTSKQRGLTFRPITQTMYWILVADLLILTWIGGQPVEYPFIIIGQMASIAYFAIIVILMPMAGMIENNILNLD</sequence>
<geneLocation type="mitochondrion"/>
<protein>
    <recommendedName>
        <fullName>Cytochrome b</fullName>
    </recommendedName>
    <alternativeName>
        <fullName>Complex III subunit 3</fullName>
    </alternativeName>
    <alternativeName>
        <fullName>Complex III subunit III</fullName>
    </alternativeName>
    <alternativeName>
        <fullName>Cytochrome b-c1 complex subunit 3</fullName>
    </alternativeName>
    <alternativeName>
        <fullName>Ubiquinol-cytochrome-c reductase complex cytochrome b subunit</fullName>
    </alternativeName>
</protein>
<reference key="1">
    <citation type="journal article" date="2004" name="Mol. Phylogenet. Evol.">
        <title>Historical biogeography at the crossroads of the northern continents: molecular phylogenetics of red-backed voles (Rodentia: Arvicolinae).</title>
        <authorList>
            <person name="Cook J.A."/>
            <person name="Runck A.M."/>
            <person name="Conroy C.J."/>
        </authorList>
    </citation>
    <scope>NUCLEOTIDE SEQUENCE [GENOMIC DNA]</scope>
    <source>
        <strain>Isolate LHS 541</strain>
        <strain>Isolate LHS642</strain>
    </source>
</reference>
<comment type="function">
    <text evidence="2">Component of the ubiquinol-cytochrome c reductase complex (complex III or cytochrome b-c1 complex) that is part of the mitochondrial respiratory chain. The b-c1 complex mediates electron transfer from ubiquinol to cytochrome c. Contributes to the generation of a proton gradient across the mitochondrial membrane that is then used for ATP synthesis.</text>
</comment>
<comment type="cofactor">
    <cofactor evidence="2">
        <name>heme b</name>
        <dbReference type="ChEBI" id="CHEBI:60344"/>
    </cofactor>
    <text evidence="2">Binds 2 heme b groups non-covalently.</text>
</comment>
<comment type="subunit">
    <text evidence="2">The cytochrome bc1 complex contains 11 subunits: 3 respiratory subunits (MT-CYB, CYC1 and UQCRFS1), 2 core proteins (UQCRC1 and UQCRC2) and 6 low-molecular weight proteins (UQCRH/QCR6, UQCRB/QCR7, UQCRQ/QCR8, UQCR10/QCR9, UQCR11/QCR10 and a cleavage product of UQCRFS1). This cytochrome bc1 complex then forms a dimer.</text>
</comment>
<comment type="subcellular location">
    <subcellularLocation>
        <location evidence="2">Mitochondrion inner membrane</location>
        <topology evidence="2">Multi-pass membrane protein</topology>
    </subcellularLocation>
</comment>
<comment type="miscellaneous">
    <text evidence="1">Heme 1 (or BL or b562) is low-potential and absorbs at about 562 nm, and heme 2 (or BH or b566) is high-potential and absorbs at about 566 nm.</text>
</comment>
<comment type="similarity">
    <text evidence="3 4">Belongs to the cytochrome b family.</text>
</comment>
<comment type="caution">
    <text evidence="2">The full-length protein contains only eight transmembrane helices, not nine as predicted by bioinformatics tools.</text>
</comment>
<name>CYB_CLECA</name>
<dbReference type="EMBL" id="AY309422">
    <property type="protein sequence ID" value="AAQ77214.1"/>
    <property type="molecule type" value="Genomic_DNA"/>
</dbReference>
<dbReference type="EMBL" id="AY309423">
    <property type="protein sequence ID" value="AAQ77215.1"/>
    <property type="molecule type" value="Genomic_DNA"/>
</dbReference>
<dbReference type="SMR" id="Q6W6K7"/>
<dbReference type="GO" id="GO:0005743">
    <property type="term" value="C:mitochondrial inner membrane"/>
    <property type="evidence" value="ECO:0007669"/>
    <property type="project" value="UniProtKB-SubCell"/>
</dbReference>
<dbReference type="GO" id="GO:0045275">
    <property type="term" value="C:respiratory chain complex III"/>
    <property type="evidence" value="ECO:0007669"/>
    <property type="project" value="InterPro"/>
</dbReference>
<dbReference type="GO" id="GO:0046872">
    <property type="term" value="F:metal ion binding"/>
    <property type="evidence" value="ECO:0007669"/>
    <property type="project" value="UniProtKB-KW"/>
</dbReference>
<dbReference type="GO" id="GO:0008121">
    <property type="term" value="F:ubiquinol-cytochrome-c reductase activity"/>
    <property type="evidence" value="ECO:0007669"/>
    <property type="project" value="InterPro"/>
</dbReference>
<dbReference type="GO" id="GO:0006122">
    <property type="term" value="P:mitochondrial electron transport, ubiquinol to cytochrome c"/>
    <property type="evidence" value="ECO:0007669"/>
    <property type="project" value="TreeGrafter"/>
</dbReference>
<dbReference type="CDD" id="cd00290">
    <property type="entry name" value="cytochrome_b_C"/>
    <property type="match status" value="1"/>
</dbReference>
<dbReference type="CDD" id="cd00284">
    <property type="entry name" value="Cytochrome_b_N"/>
    <property type="match status" value="1"/>
</dbReference>
<dbReference type="FunFam" id="1.20.810.10:FF:000002">
    <property type="entry name" value="Cytochrome b"/>
    <property type="match status" value="1"/>
</dbReference>
<dbReference type="Gene3D" id="1.20.810.10">
    <property type="entry name" value="Cytochrome Bc1 Complex, Chain C"/>
    <property type="match status" value="1"/>
</dbReference>
<dbReference type="InterPro" id="IPR005798">
    <property type="entry name" value="Cyt_b/b6_C"/>
</dbReference>
<dbReference type="InterPro" id="IPR036150">
    <property type="entry name" value="Cyt_b/b6_C_sf"/>
</dbReference>
<dbReference type="InterPro" id="IPR005797">
    <property type="entry name" value="Cyt_b/b6_N"/>
</dbReference>
<dbReference type="InterPro" id="IPR027387">
    <property type="entry name" value="Cytb/b6-like_sf"/>
</dbReference>
<dbReference type="InterPro" id="IPR030689">
    <property type="entry name" value="Cytochrome_b"/>
</dbReference>
<dbReference type="InterPro" id="IPR048260">
    <property type="entry name" value="Cytochrome_b_C_euk/bac"/>
</dbReference>
<dbReference type="InterPro" id="IPR048259">
    <property type="entry name" value="Cytochrome_b_N_euk/bac"/>
</dbReference>
<dbReference type="InterPro" id="IPR016174">
    <property type="entry name" value="Di-haem_cyt_TM"/>
</dbReference>
<dbReference type="PANTHER" id="PTHR19271">
    <property type="entry name" value="CYTOCHROME B"/>
    <property type="match status" value="1"/>
</dbReference>
<dbReference type="PANTHER" id="PTHR19271:SF16">
    <property type="entry name" value="CYTOCHROME B"/>
    <property type="match status" value="1"/>
</dbReference>
<dbReference type="Pfam" id="PF00032">
    <property type="entry name" value="Cytochrom_B_C"/>
    <property type="match status" value="1"/>
</dbReference>
<dbReference type="Pfam" id="PF00033">
    <property type="entry name" value="Cytochrome_B"/>
    <property type="match status" value="1"/>
</dbReference>
<dbReference type="PIRSF" id="PIRSF038885">
    <property type="entry name" value="COB"/>
    <property type="match status" value="1"/>
</dbReference>
<dbReference type="SUPFAM" id="SSF81648">
    <property type="entry name" value="a domain/subunit of cytochrome bc1 complex (Ubiquinol-cytochrome c reductase)"/>
    <property type="match status" value="1"/>
</dbReference>
<dbReference type="SUPFAM" id="SSF81342">
    <property type="entry name" value="Transmembrane di-heme cytochromes"/>
    <property type="match status" value="1"/>
</dbReference>
<dbReference type="PROSITE" id="PS51003">
    <property type="entry name" value="CYTB_CTER"/>
    <property type="match status" value="1"/>
</dbReference>
<dbReference type="PROSITE" id="PS51002">
    <property type="entry name" value="CYTB_NTER"/>
    <property type="match status" value="1"/>
</dbReference>